<accession>A3CWJ3</accession>
<keyword id="KW-0030">Aminoacyl-tRNA synthetase</keyword>
<keyword id="KW-0067">ATP-binding</keyword>
<keyword id="KW-0963">Cytoplasm</keyword>
<keyword id="KW-0436">Ligase</keyword>
<keyword id="KW-0547">Nucleotide-binding</keyword>
<keyword id="KW-0648">Protein biosynthesis</keyword>
<dbReference type="EC" id="6.1.1.17" evidence="1"/>
<dbReference type="EMBL" id="CP000562">
    <property type="protein sequence ID" value="ABN57743.1"/>
    <property type="molecule type" value="Genomic_DNA"/>
</dbReference>
<dbReference type="RefSeq" id="WP_011844652.1">
    <property type="nucleotide sequence ID" value="NC_009051.1"/>
</dbReference>
<dbReference type="SMR" id="A3CWJ3"/>
<dbReference type="STRING" id="368407.Memar_1817"/>
<dbReference type="GeneID" id="4846059"/>
<dbReference type="KEGG" id="mem:Memar_1817"/>
<dbReference type="eggNOG" id="arCOG04302">
    <property type="taxonomic scope" value="Archaea"/>
</dbReference>
<dbReference type="HOGENOM" id="CLU_001882_1_3_2"/>
<dbReference type="OrthoDB" id="10470at2157"/>
<dbReference type="Proteomes" id="UP000002146">
    <property type="component" value="Chromosome"/>
</dbReference>
<dbReference type="GO" id="GO:0005829">
    <property type="term" value="C:cytosol"/>
    <property type="evidence" value="ECO:0007669"/>
    <property type="project" value="TreeGrafter"/>
</dbReference>
<dbReference type="GO" id="GO:0032991">
    <property type="term" value="C:protein-containing complex"/>
    <property type="evidence" value="ECO:0007669"/>
    <property type="project" value="UniProtKB-ARBA"/>
</dbReference>
<dbReference type="GO" id="GO:0005524">
    <property type="term" value="F:ATP binding"/>
    <property type="evidence" value="ECO:0007669"/>
    <property type="project" value="UniProtKB-UniRule"/>
</dbReference>
<dbReference type="GO" id="GO:0004818">
    <property type="term" value="F:glutamate-tRNA ligase activity"/>
    <property type="evidence" value="ECO:0007669"/>
    <property type="project" value="UniProtKB-UniRule"/>
</dbReference>
<dbReference type="GO" id="GO:0043604">
    <property type="term" value="P:amide biosynthetic process"/>
    <property type="evidence" value="ECO:0007669"/>
    <property type="project" value="TreeGrafter"/>
</dbReference>
<dbReference type="GO" id="GO:0006424">
    <property type="term" value="P:glutamyl-tRNA aminoacylation"/>
    <property type="evidence" value="ECO:0007669"/>
    <property type="project" value="UniProtKB-UniRule"/>
</dbReference>
<dbReference type="Gene3D" id="2.40.240.100">
    <property type="match status" value="1"/>
</dbReference>
<dbReference type="Gene3D" id="3.40.50.620">
    <property type="entry name" value="HUPs"/>
    <property type="match status" value="1"/>
</dbReference>
<dbReference type="Gene3D" id="2.40.240.10">
    <property type="entry name" value="Ribosomal Protein L25, Chain P"/>
    <property type="match status" value="1"/>
</dbReference>
<dbReference type="HAMAP" id="MF_02076">
    <property type="entry name" value="Glu_tRNA_synth_type2"/>
    <property type="match status" value="1"/>
</dbReference>
<dbReference type="InterPro" id="IPR001412">
    <property type="entry name" value="aa-tRNA-synth_I_CS"/>
</dbReference>
<dbReference type="InterPro" id="IPR050132">
    <property type="entry name" value="Gln/Glu-tRNA_Ligase"/>
</dbReference>
<dbReference type="InterPro" id="IPR004526">
    <property type="entry name" value="Glu-tRNA-synth_arc/euk"/>
</dbReference>
<dbReference type="InterPro" id="IPR000924">
    <property type="entry name" value="Glu/Gln-tRNA-synth"/>
</dbReference>
<dbReference type="InterPro" id="IPR020058">
    <property type="entry name" value="Glu/Gln-tRNA-synth_Ib_cat-dom"/>
</dbReference>
<dbReference type="InterPro" id="IPR020059">
    <property type="entry name" value="Glu/Gln-tRNA-synth_Ib_codon-bd"/>
</dbReference>
<dbReference type="InterPro" id="IPR020056">
    <property type="entry name" value="Rbsml_bL25/Gln-tRNA_synth_N"/>
</dbReference>
<dbReference type="InterPro" id="IPR011035">
    <property type="entry name" value="Ribosomal_bL25/Gln-tRNA_synth"/>
</dbReference>
<dbReference type="InterPro" id="IPR014729">
    <property type="entry name" value="Rossmann-like_a/b/a_fold"/>
</dbReference>
<dbReference type="InterPro" id="IPR049437">
    <property type="entry name" value="tRNA-synt_1c_C2"/>
</dbReference>
<dbReference type="NCBIfam" id="TIGR00463">
    <property type="entry name" value="gltX_arch"/>
    <property type="match status" value="1"/>
</dbReference>
<dbReference type="NCBIfam" id="NF003169">
    <property type="entry name" value="PRK04156.1"/>
    <property type="match status" value="1"/>
</dbReference>
<dbReference type="PANTHER" id="PTHR43097:SF5">
    <property type="entry name" value="GLUTAMATE--TRNA LIGASE"/>
    <property type="match status" value="1"/>
</dbReference>
<dbReference type="PANTHER" id="PTHR43097">
    <property type="entry name" value="GLUTAMINE-TRNA LIGASE"/>
    <property type="match status" value="1"/>
</dbReference>
<dbReference type="Pfam" id="PF00749">
    <property type="entry name" value="tRNA-synt_1c"/>
    <property type="match status" value="1"/>
</dbReference>
<dbReference type="Pfam" id="PF03950">
    <property type="entry name" value="tRNA-synt_1c_C"/>
    <property type="match status" value="1"/>
</dbReference>
<dbReference type="Pfam" id="PF20974">
    <property type="entry name" value="tRNA-synt_1c_C2"/>
    <property type="match status" value="1"/>
</dbReference>
<dbReference type="PRINTS" id="PR00987">
    <property type="entry name" value="TRNASYNTHGLU"/>
</dbReference>
<dbReference type="SUPFAM" id="SSF52374">
    <property type="entry name" value="Nucleotidylyl transferase"/>
    <property type="match status" value="1"/>
</dbReference>
<dbReference type="SUPFAM" id="SSF50715">
    <property type="entry name" value="Ribosomal protein L25-like"/>
    <property type="match status" value="1"/>
</dbReference>
<dbReference type="PROSITE" id="PS00178">
    <property type="entry name" value="AA_TRNA_LIGASE_I"/>
    <property type="match status" value="1"/>
</dbReference>
<comment type="function">
    <text evidence="1">Catalyzes the attachment of glutamate to tRNA(Glu) in a two-step reaction: glutamate is first activated by ATP to form Glu-AMP and then transferred to the acceptor end of tRNA(Glu).</text>
</comment>
<comment type="catalytic activity">
    <reaction evidence="1">
        <text>tRNA(Glu) + L-glutamate + ATP = L-glutamyl-tRNA(Glu) + AMP + diphosphate</text>
        <dbReference type="Rhea" id="RHEA:23540"/>
        <dbReference type="Rhea" id="RHEA-COMP:9663"/>
        <dbReference type="Rhea" id="RHEA-COMP:9680"/>
        <dbReference type="ChEBI" id="CHEBI:29985"/>
        <dbReference type="ChEBI" id="CHEBI:30616"/>
        <dbReference type="ChEBI" id="CHEBI:33019"/>
        <dbReference type="ChEBI" id="CHEBI:78442"/>
        <dbReference type="ChEBI" id="CHEBI:78520"/>
        <dbReference type="ChEBI" id="CHEBI:456215"/>
        <dbReference type="EC" id="6.1.1.17"/>
    </reaction>
</comment>
<comment type="subcellular location">
    <subcellularLocation>
        <location evidence="1">Cytoplasm</location>
    </subcellularLocation>
</comment>
<comment type="similarity">
    <text evidence="1">Belongs to the class-I aminoacyl-tRNA synthetase family. Glutamate--tRNA ligase type 2 subfamily.</text>
</comment>
<reference key="1">
    <citation type="journal article" date="2009" name="Stand. Genomic Sci.">
        <title>Complete genome sequence of Methanoculleus marisnigri Romesser et al. 1981 type strain JR1.</title>
        <authorList>
            <person name="Anderson I.J."/>
            <person name="Sieprawska-Lupa M."/>
            <person name="Lapidus A."/>
            <person name="Nolan M."/>
            <person name="Copeland A."/>
            <person name="Glavina Del Rio T."/>
            <person name="Tice H."/>
            <person name="Dalin E."/>
            <person name="Barry K."/>
            <person name="Saunders E."/>
            <person name="Han C."/>
            <person name="Brettin T."/>
            <person name="Detter J.C."/>
            <person name="Bruce D."/>
            <person name="Mikhailova N."/>
            <person name="Pitluck S."/>
            <person name="Hauser L."/>
            <person name="Land M."/>
            <person name="Lucas S."/>
            <person name="Richardson P."/>
            <person name="Whitman W.B."/>
            <person name="Kyrpides N.C."/>
        </authorList>
    </citation>
    <scope>NUCLEOTIDE SEQUENCE [LARGE SCALE GENOMIC DNA]</scope>
    <source>
        <strain>ATCC 35101 / DSM 1498 / JR1</strain>
    </source>
</reference>
<sequence>MDGDIEHLLFIYALQNAVKHDSAPKSGTVIGTVLGKHPEFRSRARELGPLAGKAVAQVGKMSAADRKSRLEALAPELLAELTETHEHVRKLPDLEGAENGVVMRFAPNPSGPLHLGHARASILNDYYVRRYGGRYVLRVEDTDPKRVDPDAYAMVLEDVEWLGLGITDIVYQSDRLDIYYDWCRKLIELGGAYVCVCDSERFRELKLKGKACPCRELTVEENLELWQQMLDGEFYEGDVTVRVKTDLAHPDPAMRDYSAMRIVNAPLHPRVDATVFPLMNFSVAVDDHLLGITHVIRGKDHIANTRRQRYIFDYFGWKPPVYRHYGRMGISGVVLSTSGMREGINSGLYTGWDDIHLGTMRAIARRGIEPEAVRNAMVDIGIGETDISFSWENLYSRNKELVDPKANRYFFVPDPVEVTVEGAPRREAHAALHPNDPSRGVRTLVAEEAILLPRADIEGKSMVRLKDLYNVKIAWDGDTPRVSYAGDSLEEARHEKAPIIQWLPADAKLPCTLLRQDGSLEGFCEPLVAGETDRVVQFERIGFARIDSADGGRVSAYFAHR</sequence>
<protein>
    <recommendedName>
        <fullName evidence="1">Glutamate--tRNA ligase</fullName>
        <ecNumber evidence="1">6.1.1.17</ecNumber>
    </recommendedName>
    <alternativeName>
        <fullName evidence="1">Glutamyl-tRNA synthetase</fullName>
        <shortName evidence="1">GluRS</shortName>
    </alternativeName>
</protein>
<evidence type="ECO:0000255" key="1">
    <source>
        <dbReference type="HAMAP-Rule" id="MF_02076"/>
    </source>
</evidence>
<name>SYE_METMJ</name>
<gene>
    <name evidence="1" type="primary">gltX</name>
    <name type="ordered locus">Memar_1817</name>
</gene>
<feature type="chain" id="PRO_0000331009" description="Glutamate--tRNA ligase">
    <location>
        <begin position="1"/>
        <end position="561"/>
    </location>
</feature>
<feature type="short sequence motif" description="'HIGH' region" evidence="1">
    <location>
        <begin position="107"/>
        <end position="117"/>
    </location>
</feature>
<proteinExistence type="inferred from homology"/>
<organism>
    <name type="scientific">Methanoculleus marisnigri (strain ATCC 35101 / DSM 1498 / JR1)</name>
    <dbReference type="NCBI Taxonomy" id="368407"/>
    <lineage>
        <taxon>Archaea</taxon>
        <taxon>Methanobacteriati</taxon>
        <taxon>Methanobacteriota</taxon>
        <taxon>Stenosarchaea group</taxon>
        <taxon>Methanomicrobia</taxon>
        <taxon>Methanomicrobiales</taxon>
        <taxon>Methanomicrobiaceae</taxon>
        <taxon>Methanoculleus</taxon>
    </lineage>
</organism>